<proteinExistence type="evidence at protein level"/>
<sequence length="335" mass="36901">MWRLLATLSCLVLLTSARESLHFQPLSDELVNFINKQNTTWTAGHNFYNVDLSYVKKLCGTFLGGPKLPQRAAFAADMILPKSFDAREQWPNCPTIKEIRDQGSCGSCWAFGAVEAISDRICIRSNGRVNVEVSAEDMLTCCGDECGDGCNGGFPSGAWNFWTKKGLVSGGLYDSHVGCRPYSIPPCEHHVNGSRPPCTGEGDTPKCSKICEPGYTPSYKEDKHFGCSSYSISRNEKEIMAEIYKNGPVEGAFTVYSDFLQYKSGVYQHVTGDLMGGHAIRILGWGVENGTPYWLVGNSWNTDWGDNGFFKILRGQDHCGIESEIVAGIPCTPHF</sequence>
<comment type="function">
    <text evidence="1 3 4">Thiol protease which is believed to participate in intracellular degradation and turnover of proteins (By similarity). Cleaves matrix extracellular phosphoglycoprotein MEPE (By similarity). Involved in the solubilization of cross-linked TG/thyroglobulin in the thyroid follicle lumen (By similarity). Has also been implicated in tumor invasion and metastasis (By similarity).</text>
</comment>
<comment type="catalytic activity">
    <reaction evidence="3">
        <text>Hydrolysis of proteins with broad specificity for peptide bonds. Preferentially cleaves -Arg-Arg-|-Xaa bonds in small molecule substrates (thus differing from cathepsin L). In addition to being an endopeptidase, shows peptidyl-dipeptidase activity, liberating C-terminal dipeptides.</text>
        <dbReference type="EC" id="3.4.22.1"/>
    </reaction>
</comment>
<comment type="subunit">
    <text evidence="3">Dimer of a heavy chain and a light chain cross-linked by a disulfide bond. Interacts with SRPX2. Directly interacts with SHKBP1.</text>
</comment>
<comment type="subcellular location">
    <subcellularLocation>
        <location evidence="3">Lysosome</location>
    </subcellularLocation>
    <subcellularLocation>
        <location evidence="3">Melanosome</location>
    </subcellularLocation>
    <subcellularLocation>
        <location evidence="9">Secreted</location>
        <location evidence="9">Extracellular space</location>
    </subcellularLocation>
    <subcellularLocation>
        <location evidence="4">Apical cell membrane</location>
        <topology evidence="4">Peripheral membrane protein</topology>
        <orientation evidence="4">Extracellular side</orientation>
    </subcellularLocation>
    <text evidence="4">Localizes to the lumen of thyroid follicles and to the apical membrane of thyroid epithelial cells.</text>
</comment>
<comment type="tissue specificity">
    <text evidence="9">Expressed in heart (at protein level).</text>
</comment>
<comment type="similarity">
    <text evidence="6 7 8">Belongs to the peptidase C1 family.</text>
</comment>
<keyword id="KW-0007">Acetylation</keyword>
<keyword id="KW-1003">Cell membrane</keyword>
<keyword id="KW-1015">Disulfide bond</keyword>
<keyword id="KW-0325">Glycoprotein</keyword>
<keyword id="KW-0378">Hydrolase</keyword>
<keyword id="KW-0458">Lysosome</keyword>
<keyword id="KW-0472">Membrane</keyword>
<keyword id="KW-0645">Protease</keyword>
<keyword id="KW-1185">Reference proteome</keyword>
<keyword id="KW-0964">Secreted</keyword>
<keyword id="KW-0732">Signal</keyword>
<keyword id="KW-0788">Thiol protease</keyword>
<keyword id="KW-0865">Zymogen</keyword>
<reference key="1">
    <citation type="submission" date="2006-11" db="EMBL/GenBank/DDBJ databases">
        <title>Molecular cloning and polymorphism of cathepsin B (CTSB) gene in porcine.</title>
        <authorList>
            <person name="Chen L."/>
            <person name="Li X.W."/>
            <person name="Zhu L."/>
            <person name="Li Q."/>
            <person name="Li M.Z."/>
        </authorList>
    </citation>
    <scope>NUCLEOTIDE SEQUENCE [MRNA]</scope>
</reference>
<reference key="2">
    <citation type="journal article" date="2012" name="Circulation">
        <title>Proteomics analysis of cardiac extracellular matrix remodeling in a porcine model of ischemia/reperfusion injury.</title>
        <authorList>
            <person name="Barallobre-Barreiro J."/>
            <person name="Didangelos A."/>
            <person name="Schoendube F.A."/>
            <person name="Drozdov I."/>
            <person name="Yin X."/>
            <person name="Fernandez-Caggiano M."/>
            <person name="Willeit P."/>
            <person name="Puntmann V.O."/>
            <person name="Aldama-Lopez G."/>
            <person name="Shah A.M."/>
            <person name="Domenech N."/>
            <person name="Mayr M."/>
        </authorList>
    </citation>
    <scope>SUBCELLULAR LOCATION</scope>
    <scope>TISSUE SPECIFICITY</scope>
</reference>
<name>CATB_PIG</name>
<protein>
    <recommendedName>
        <fullName>Cathepsin B</fullName>
        <ecNumber evidence="3">3.4.22.1</ecNumber>
    </recommendedName>
    <component>
        <recommendedName>
            <fullName evidence="3">Cathepsin B light chain</fullName>
        </recommendedName>
    </component>
    <component>
        <recommendedName>
            <fullName evidence="3">Cathepsin B heavy chain</fullName>
        </recommendedName>
    </component>
</protein>
<organism>
    <name type="scientific">Sus scrofa</name>
    <name type="common">Pig</name>
    <dbReference type="NCBI Taxonomy" id="9823"/>
    <lineage>
        <taxon>Eukaryota</taxon>
        <taxon>Metazoa</taxon>
        <taxon>Chordata</taxon>
        <taxon>Craniata</taxon>
        <taxon>Vertebrata</taxon>
        <taxon>Euteleostomi</taxon>
        <taxon>Mammalia</taxon>
        <taxon>Eutheria</taxon>
        <taxon>Laurasiatheria</taxon>
        <taxon>Artiodactyla</taxon>
        <taxon>Suina</taxon>
        <taxon>Suidae</taxon>
        <taxon>Sus</taxon>
    </lineage>
</organism>
<accession>A1E295</accession>
<gene>
    <name type="primary">CTSB</name>
</gene>
<feature type="signal peptide" evidence="5">
    <location>
        <begin position="1"/>
        <end position="17"/>
    </location>
</feature>
<feature type="propeptide" id="PRO_0000330885" description="Activation peptide" evidence="3">
    <location>
        <begin position="18"/>
        <end position="79"/>
    </location>
</feature>
<feature type="chain" id="PRO_0000330886" description="Cathepsin B">
    <location>
        <begin position="80"/>
        <end position="332"/>
    </location>
</feature>
<feature type="chain" id="PRO_0000330887" description="Cathepsin B light chain" evidence="3">
    <location>
        <begin position="80"/>
        <end position="126"/>
    </location>
</feature>
<feature type="chain" id="PRO_0000330888" description="Cathepsin B heavy chain" evidence="3">
    <location>
        <begin position="129"/>
        <end position="332"/>
    </location>
</feature>
<feature type="propeptide" id="PRO_0000330889" evidence="2">
    <location>
        <begin position="333"/>
        <end position="335"/>
    </location>
</feature>
<feature type="active site" evidence="6">
    <location>
        <position position="108"/>
    </location>
</feature>
<feature type="active site" evidence="7">
    <location>
        <position position="278"/>
    </location>
</feature>
<feature type="active site" evidence="8">
    <location>
        <position position="298"/>
    </location>
</feature>
<feature type="modified residue" description="N6-acetyllysine" evidence="4">
    <location>
        <position position="220"/>
    </location>
</feature>
<feature type="glycosylation site" description="N-linked (GlcNAc...) asparagine" evidence="2">
    <location>
        <position position="192"/>
    </location>
</feature>
<feature type="disulfide bond" evidence="3">
    <location>
        <begin position="93"/>
        <end position="122"/>
    </location>
</feature>
<feature type="disulfide bond" evidence="3">
    <location>
        <begin position="105"/>
        <end position="150"/>
    </location>
</feature>
<feature type="disulfide bond" evidence="3">
    <location>
        <begin position="141"/>
        <end position="207"/>
    </location>
</feature>
<feature type="disulfide bond" evidence="3">
    <location>
        <begin position="142"/>
        <end position="146"/>
    </location>
</feature>
<feature type="disulfide bond" evidence="3">
    <location>
        <begin position="179"/>
        <end position="211"/>
    </location>
</feature>
<feature type="disulfide bond" evidence="3">
    <location>
        <begin position="187"/>
        <end position="198"/>
    </location>
</feature>
<feature type="disulfide bond" evidence="3">
    <location>
        <begin position="227"/>
        <end position="331"/>
    </location>
</feature>
<evidence type="ECO:0000250" key="1">
    <source>
        <dbReference type="UniProtKB" id="P00787"/>
    </source>
</evidence>
<evidence type="ECO:0000250" key="2">
    <source>
        <dbReference type="UniProtKB" id="P07688"/>
    </source>
</evidence>
<evidence type="ECO:0000250" key="3">
    <source>
        <dbReference type="UniProtKB" id="P07858"/>
    </source>
</evidence>
<evidence type="ECO:0000250" key="4">
    <source>
        <dbReference type="UniProtKB" id="P10605"/>
    </source>
</evidence>
<evidence type="ECO:0000255" key="5"/>
<evidence type="ECO:0000255" key="6">
    <source>
        <dbReference type="PROSITE-ProRule" id="PRU10088"/>
    </source>
</evidence>
<evidence type="ECO:0000255" key="7">
    <source>
        <dbReference type="PROSITE-ProRule" id="PRU10089"/>
    </source>
</evidence>
<evidence type="ECO:0000255" key="8">
    <source>
        <dbReference type="PROSITE-ProRule" id="PRU10090"/>
    </source>
</evidence>
<evidence type="ECO:0000269" key="9">
    <source>
    </source>
</evidence>
<dbReference type="EC" id="3.4.22.1" evidence="3"/>
<dbReference type="EMBL" id="EF095956">
    <property type="protein sequence ID" value="ABK96810.1"/>
    <property type="molecule type" value="mRNA"/>
</dbReference>
<dbReference type="RefSeq" id="NP_001090927.1">
    <property type="nucleotide sequence ID" value="NM_001097458.1"/>
</dbReference>
<dbReference type="RefSeq" id="XP_005657322.2">
    <property type="nucleotide sequence ID" value="XM_005657265.2"/>
</dbReference>
<dbReference type="RefSeq" id="XP_005657323.1">
    <property type="nucleotide sequence ID" value="XM_005657266.3"/>
</dbReference>
<dbReference type="RefSeq" id="XP_005657324.1">
    <property type="nucleotide sequence ID" value="XM_005657267.3"/>
</dbReference>
<dbReference type="RefSeq" id="XP_013845747.1">
    <property type="nucleotide sequence ID" value="XM_013990293.2"/>
</dbReference>
<dbReference type="RefSeq" id="XP_020927422.1">
    <property type="nucleotide sequence ID" value="XM_021071763.1"/>
</dbReference>
<dbReference type="RefSeq" id="XP_020927423.1">
    <property type="nucleotide sequence ID" value="XM_021071764.1"/>
</dbReference>
<dbReference type="SMR" id="A1E295"/>
<dbReference type="FunCoup" id="A1E295">
    <property type="interactions" value="1315"/>
</dbReference>
<dbReference type="IntAct" id="A1E295">
    <property type="interactions" value="2"/>
</dbReference>
<dbReference type="STRING" id="9823.ENSSSCP00000024395"/>
<dbReference type="MEROPS" id="C01.060"/>
<dbReference type="GlyCosmos" id="A1E295">
    <property type="glycosylation" value="1 site, No reported glycans"/>
</dbReference>
<dbReference type="GlyGen" id="A1E295">
    <property type="glycosylation" value="1 site"/>
</dbReference>
<dbReference type="PaxDb" id="9823-ENSSSCP00000024395"/>
<dbReference type="PeptideAtlas" id="A1E295"/>
<dbReference type="Ensembl" id="ENSSSCT00000049406.3">
    <property type="protein sequence ID" value="ENSSSCP00000046743.1"/>
    <property type="gene ID" value="ENSSSCG00000023666.4"/>
</dbReference>
<dbReference type="Ensembl" id="ENSSSCT00015003893.1">
    <property type="protein sequence ID" value="ENSSSCP00015001345.1"/>
    <property type="gene ID" value="ENSSSCG00015002579.1"/>
</dbReference>
<dbReference type="Ensembl" id="ENSSSCT00015003921.1">
    <property type="protein sequence ID" value="ENSSSCP00015001359.1"/>
    <property type="gene ID" value="ENSSSCG00015002579.1"/>
</dbReference>
<dbReference type="Ensembl" id="ENSSSCT00025035776.1">
    <property type="protein sequence ID" value="ENSSSCP00025014937.1"/>
    <property type="gene ID" value="ENSSSCG00025026366.1"/>
</dbReference>
<dbReference type="Ensembl" id="ENSSSCT00030004003.1">
    <property type="protein sequence ID" value="ENSSSCP00030001587.1"/>
    <property type="gene ID" value="ENSSSCG00030002799.1"/>
</dbReference>
<dbReference type="Ensembl" id="ENSSSCT00035095352.1">
    <property type="protein sequence ID" value="ENSSSCP00035040101.1"/>
    <property type="gene ID" value="ENSSSCG00035070519.1"/>
</dbReference>
<dbReference type="Ensembl" id="ENSSSCT00040104061.1">
    <property type="protein sequence ID" value="ENSSSCP00040047304.1"/>
    <property type="gene ID" value="ENSSSCG00040075101.1"/>
</dbReference>
<dbReference type="Ensembl" id="ENSSSCT00045032170.1">
    <property type="protein sequence ID" value="ENSSSCP00045022270.1"/>
    <property type="gene ID" value="ENSSSCG00045018627.1"/>
</dbReference>
<dbReference type="Ensembl" id="ENSSSCT00045032247.1">
    <property type="protein sequence ID" value="ENSSSCP00045022327.1"/>
    <property type="gene ID" value="ENSSSCG00045018627.1"/>
</dbReference>
<dbReference type="Ensembl" id="ENSSSCT00045032316.1">
    <property type="protein sequence ID" value="ENSSSCP00045022379.1"/>
    <property type="gene ID" value="ENSSSCG00045018627.1"/>
</dbReference>
<dbReference type="Ensembl" id="ENSSSCT00045032398.1">
    <property type="protein sequence ID" value="ENSSSCP00045022441.1"/>
    <property type="gene ID" value="ENSSSCG00045018627.1"/>
</dbReference>
<dbReference type="Ensembl" id="ENSSSCT00045032468.1">
    <property type="protein sequence ID" value="ENSSSCP00045022486.1"/>
    <property type="gene ID" value="ENSSSCG00045018627.1"/>
</dbReference>
<dbReference type="Ensembl" id="ENSSSCT00050073267.1">
    <property type="protein sequence ID" value="ENSSSCP00050031547.1"/>
    <property type="gene ID" value="ENSSSCG00050053741.1"/>
</dbReference>
<dbReference type="Ensembl" id="ENSSSCT00055000049.1">
    <property type="protein sequence ID" value="ENSSSCP00055000041.1"/>
    <property type="gene ID" value="ENSSSCG00055000027.1"/>
</dbReference>
<dbReference type="Ensembl" id="ENSSSCT00060041735.1">
    <property type="protein sequence ID" value="ENSSSCP00060017740.1"/>
    <property type="gene ID" value="ENSSSCG00060030710.1"/>
</dbReference>
<dbReference type="Ensembl" id="ENSSSCT00065036005.1">
    <property type="protein sequence ID" value="ENSSSCP00065015077.1"/>
    <property type="gene ID" value="ENSSSCG00065026769.1"/>
</dbReference>
<dbReference type="Ensembl" id="ENSSSCT00065036011.1">
    <property type="protein sequence ID" value="ENSSSCP00065015080.1"/>
    <property type="gene ID" value="ENSSSCG00065026769.1"/>
</dbReference>
<dbReference type="Ensembl" id="ENSSSCT00065036014.1">
    <property type="protein sequence ID" value="ENSSSCP00065015082.1"/>
    <property type="gene ID" value="ENSSSCG00065026769.1"/>
</dbReference>
<dbReference type="Ensembl" id="ENSSSCT00065036024.1">
    <property type="protein sequence ID" value="ENSSSCP00065015086.1"/>
    <property type="gene ID" value="ENSSSCG00065026769.1"/>
</dbReference>
<dbReference type="Ensembl" id="ENSSSCT00085026783">
    <property type="protein sequence ID" value="ENSSSCP00085018425"/>
    <property type="gene ID" value="ENSSSCG00085014179"/>
</dbReference>
<dbReference type="Ensembl" id="ENSSSCT00090020574">
    <property type="protein sequence ID" value="ENSSSCP00090012738"/>
    <property type="gene ID" value="ENSSSCG00090011611"/>
</dbReference>
<dbReference type="Ensembl" id="ENSSSCT00105010726">
    <property type="protein sequence ID" value="ENSSSCP00105007924"/>
    <property type="gene ID" value="ENSSSCG00105005300"/>
</dbReference>
<dbReference type="Ensembl" id="ENSSSCT00110071783">
    <property type="protein sequence ID" value="ENSSSCP00110050483"/>
    <property type="gene ID" value="ENSSSCG00110037688"/>
</dbReference>
<dbReference type="Ensembl" id="ENSSSCT00115004234">
    <property type="protein sequence ID" value="ENSSSCP00115003908"/>
    <property type="gene ID" value="ENSSSCG00115002532"/>
</dbReference>
<dbReference type="Ensembl" id="ENSSSCT00130008465">
    <property type="protein sequence ID" value="ENSSSCP00130005705"/>
    <property type="gene ID" value="ENSSSCG00130004521"/>
</dbReference>
<dbReference type="GeneID" id="100037961"/>
<dbReference type="KEGG" id="ssc:100037961"/>
<dbReference type="CTD" id="1508"/>
<dbReference type="VGNC" id="VGNC:87074">
    <property type="gene designation" value="CTSB"/>
</dbReference>
<dbReference type="eggNOG" id="KOG1543">
    <property type="taxonomic scope" value="Eukaryota"/>
</dbReference>
<dbReference type="GeneTree" id="ENSGT00940000158680"/>
<dbReference type="HOGENOM" id="CLU_012184_3_3_1"/>
<dbReference type="InParanoid" id="A1E295"/>
<dbReference type="OrthoDB" id="640249at2759"/>
<dbReference type="TreeFam" id="TF314576"/>
<dbReference type="Reactome" id="R-SSC-1442490">
    <property type="pathway name" value="Collagen degradation"/>
</dbReference>
<dbReference type="Reactome" id="R-SSC-1679131">
    <property type="pathway name" value="Trafficking and processing of endosomal TLR"/>
</dbReference>
<dbReference type="Reactome" id="R-SSC-2022090">
    <property type="pathway name" value="Assembly of collagen fibrils and other multimeric structures"/>
</dbReference>
<dbReference type="Reactome" id="R-SSC-2132295">
    <property type="pathway name" value="MHC class II antigen presentation"/>
</dbReference>
<dbReference type="Reactome" id="R-SSC-6798695">
    <property type="pathway name" value="Neutrophil degranulation"/>
</dbReference>
<dbReference type="Proteomes" id="UP000008227">
    <property type="component" value="Chromosome 14"/>
</dbReference>
<dbReference type="Proteomes" id="UP000314985">
    <property type="component" value="Unplaced"/>
</dbReference>
<dbReference type="Proteomes" id="UP000694570">
    <property type="component" value="Unplaced"/>
</dbReference>
<dbReference type="Proteomes" id="UP000694571">
    <property type="component" value="Unplaced"/>
</dbReference>
<dbReference type="Proteomes" id="UP000694720">
    <property type="component" value="Unplaced"/>
</dbReference>
<dbReference type="Proteomes" id="UP000694722">
    <property type="component" value="Unplaced"/>
</dbReference>
<dbReference type="Proteomes" id="UP000694723">
    <property type="component" value="Unplaced"/>
</dbReference>
<dbReference type="Proteomes" id="UP000694724">
    <property type="component" value="Unplaced"/>
</dbReference>
<dbReference type="Proteomes" id="UP000694725">
    <property type="component" value="Unplaced"/>
</dbReference>
<dbReference type="Proteomes" id="UP000694726">
    <property type="component" value="Unplaced"/>
</dbReference>
<dbReference type="Proteomes" id="UP000694727">
    <property type="component" value="Unplaced"/>
</dbReference>
<dbReference type="Proteomes" id="UP000694728">
    <property type="component" value="Unplaced"/>
</dbReference>
<dbReference type="Bgee" id="ENSSSCG00000023666">
    <property type="expression patterns" value="Expressed in adult mammalian kidney and 43 other cell types or tissues"/>
</dbReference>
<dbReference type="ExpressionAtlas" id="A1E295">
    <property type="expression patterns" value="baseline and differential"/>
</dbReference>
<dbReference type="GO" id="GO:0016324">
    <property type="term" value="C:apical plasma membrane"/>
    <property type="evidence" value="ECO:0007669"/>
    <property type="project" value="UniProtKB-SubCell"/>
</dbReference>
<dbReference type="GO" id="GO:0005615">
    <property type="term" value="C:extracellular space"/>
    <property type="evidence" value="ECO:0007005"/>
    <property type="project" value="BHF-UCL"/>
</dbReference>
<dbReference type="GO" id="GO:0005764">
    <property type="term" value="C:lysosome"/>
    <property type="evidence" value="ECO:0000318"/>
    <property type="project" value="GO_Central"/>
</dbReference>
<dbReference type="GO" id="GO:0042470">
    <property type="term" value="C:melanosome"/>
    <property type="evidence" value="ECO:0007669"/>
    <property type="project" value="UniProtKB-SubCell"/>
</dbReference>
<dbReference type="GO" id="GO:0004197">
    <property type="term" value="F:cysteine-type endopeptidase activity"/>
    <property type="evidence" value="ECO:0000318"/>
    <property type="project" value="GO_Central"/>
</dbReference>
<dbReference type="GO" id="GO:0004175">
    <property type="term" value="F:endopeptidase activity"/>
    <property type="evidence" value="ECO:0000250"/>
    <property type="project" value="UniProtKB"/>
</dbReference>
<dbReference type="GO" id="GO:0051603">
    <property type="term" value="P:proteolysis involved in protein catabolic process"/>
    <property type="evidence" value="ECO:0000318"/>
    <property type="project" value="GO_Central"/>
</dbReference>
<dbReference type="CDD" id="cd02620">
    <property type="entry name" value="Peptidase_C1A_CathepsinB"/>
    <property type="match status" value="1"/>
</dbReference>
<dbReference type="FunFam" id="3.90.70.10:FF:000031">
    <property type="entry name" value="Cathepsin B"/>
    <property type="match status" value="1"/>
</dbReference>
<dbReference type="Gene3D" id="3.90.70.10">
    <property type="entry name" value="Cysteine proteinases"/>
    <property type="match status" value="1"/>
</dbReference>
<dbReference type="InterPro" id="IPR038765">
    <property type="entry name" value="Papain-like_cys_pep_sf"/>
</dbReference>
<dbReference type="InterPro" id="IPR025661">
    <property type="entry name" value="Pept_asp_AS"/>
</dbReference>
<dbReference type="InterPro" id="IPR000169">
    <property type="entry name" value="Pept_cys_AS"/>
</dbReference>
<dbReference type="InterPro" id="IPR025660">
    <property type="entry name" value="Pept_his_AS"/>
</dbReference>
<dbReference type="InterPro" id="IPR013128">
    <property type="entry name" value="Peptidase_C1A"/>
</dbReference>
<dbReference type="InterPro" id="IPR000668">
    <property type="entry name" value="Peptidase_C1A_C"/>
</dbReference>
<dbReference type="InterPro" id="IPR012599">
    <property type="entry name" value="Propeptide_C1A"/>
</dbReference>
<dbReference type="PANTHER" id="PTHR12411">
    <property type="entry name" value="CYSTEINE PROTEASE FAMILY C1-RELATED"/>
    <property type="match status" value="1"/>
</dbReference>
<dbReference type="Pfam" id="PF00112">
    <property type="entry name" value="Peptidase_C1"/>
    <property type="match status" value="1"/>
</dbReference>
<dbReference type="Pfam" id="PF08127">
    <property type="entry name" value="Propeptide_C1"/>
    <property type="match status" value="1"/>
</dbReference>
<dbReference type="PRINTS" id="PR00705">
    <property type="entry name" value="PAPAIN"/>
</dbReference>
<dbReference type="SMART" id="SM00645">
    <property type="entry name" value="Pept_C1"/>
    <property type="match status" value="1"/>
</dbReference>
<dbReference type="SUPFAM" id="SSF54001">
    <property type="entry name" value="Cysteine proteinases"/>
    <property type="match status" value="1"/>
</dbReference>
<dbReference type="PROSITE" id="PS00640">
    <property type="entry name" value="THIOL_PROTEASE_ASN"/>
    <property type="match status" value="1"/>
</dbReference>
<dbReference type="PROSITE" id="PS00139">
    <property type="entry name" value="THIOL_PROTEASE_CYS"/>
    <property type="match status" value="1"/>
</dbReference>
<dbReference type="PROSITE" id="PS00639">
    <property type="entry name" value="THIOL_PROTEASE_HIS"/>
    <property type="match status" value="1"/>
</dbReference>